<keyword id="KW-0687">Ribonucleoprotein</keyword>
<keyword id="KW-0689">Ribosomal protein</keyword>
<keyword id="KW-0694">RNA-binding</keyword>
<keyword id="KW-0699">rRNA-binding</keyword>
<feature type="chain" id="PRO_1000005313" description="Small ribosomal subunit protein bS6">
    <location>
        <begin position="1"/>
        <end position="138"/>
    </location>
</feature>
<feature type="region of interest" description="Disordered" evidence="2">
    <location>
        <begin position="94"/>
        <end position="138"/>
    </location>
</feature>
<feature type="compositionally biased region" description="Basic and acidic residues" evidence="2">
    <location>
        <begin position="106"/>
        <end position="138"/>
    </location>
</feature>
<reference key="1">
    <citation type="journal article" date="2007" name="PLoS Genet.">
        <title>Patterns and implications of gene gain and loss in the evolution of Prochlorococcus.</title>
        <authorList>
            <person name="Kettler G.C."/>
            <person name="Martiny A.C."/>
            <person name="Huang K."/>
            <person name="Zucker J."/>
            <person name="Coleman M.L."/>
            <person name="Rodrigue S."/>
            <person name="Chen F."/>
            <person name="Lapidus A."/>
            <person name="Ferriera S."/>
            <person name="Johnson J."/>
            <person name="Steglich C."/>
            <person name="Church G.M."/>
            <person name="Richardson P."/>
            <person name="Chisholm S.W."/>
        </authorList>
    </citation>
    <scope>NUCLEOTIDE SEQUENCE [LARGE SCALE GENOMIC DNA]</scope>
    <source>
        <strain>NATL1A</strain>
    </source>
</reference>
<protein>
    <recommendedName>
        <fullName evidence="1">Small ribosomal subunit protein bS6</fullName>
    </recommendedName>
    <alternativeName>
        <fullName evidence="3">30S ribosomal protein S6</fullName>
    </alternativeName>
</protein>
<proteinExistence type="inferred from homology"/>
<organism>
    <name type="scientific">Prochlorococcus marinus (strain NATL1A)</name>
    <dbReference type="NCBI Taxonomy" id="167555"/>
    <lineage>
        <taxon>Bacteria</taxon>
        <taxon>Bacillati</taxon>
        <taxon>Cyanobacteriota</taxon>
        <taxon>Cyanophyceae</taxon>
        <taxon>Synechococcales</taxon>
        <taxon>Prochlorococcaceae</taxon>
        <taxon>Prochlorococcus</taxon>
    </lineage>
</organism>
<name>RS6_PROM1</name>
<sequence length="138" mass="15954">MSETPYYETMYILRPDIPEEEVDSHLKKYSAILEKSETEVLDSQMRGKRRLAYPIAKHKEGIYVQLSHKGNGQQVATLERAMRLSEDVIRYITVKQDGPLPTPKPTSKEDETEKEEVKPTEDKTESPAQEEKKEDSKE</sequence>
<accession>A2C5I5</accession>
<gene>
    <name evidence="1" type="primary">rpsF</name>
    <name evidence="1" type="synonym">rps6</name>
    <name type="ordered locus">NATL1_21891</name>
</gene>
<comment type="function">
    <text evidence="1">Binds together with bS18 to 16S ribosomal RNA.</text>
</comment>
<comment type="similarity">
    <text evidence="1">Belongs to the bacterial ribosomal protein bS6 family.</text>
</comment>
<evidence type="ECO:0000255" key="1">
    <source>
        <dbReference type="HAMAP-Rule" id="MF_00360"/>
    </source>
</evidence>
<evidence type="ECO:0000256" key="2">
    <source>
        <dbReference type="SAM" id="MobiDB-lite"/>
    </source>
</evidence>
<evidence type="ECO:0000305" key="3"/>
<dbReference type="EMBL" id="CP000553">
    <property type="protein sequence ID" value="ABM76745.1"/>
    <property type="molecule type" value="Genomic_DNA"/>
</dbReference>
<dbReference type="RefSeq" id="WP_011824679.1">
    <property type="nucleotide sequence ID" value="NC_008819.1"/>
</dbReference>
<dbReference type="SMR" id="A2C5I5"/>
<dbReference type="KEGG" id="pme:NATL1_21891"/>
<dbReference type="eggNOG" id="COG0360">
    <property type="taxonomic scope" value="Bacteria"/>
</dbReference>
<dbReference type="HOGENOM" id="CLU_113441_4_2_3"/>
<dbReference type="Proteomes" id="UP000002592">
    <property type="component" value="Chromosome"/>
</dbReference>
<dbReference type="GO" id="GO:0005737">
    <property type="term" value="C:cytoplasm"/>
    <property type="evidence" value="ECO:0007669"/>
    <property type="project" value="UniProtKB-ARBA"/>
</dbReference>
<dbReference type="GO" id="GO:1990904">
    <property type="term" value="C:ribonucleoprotein complex"/>
    <property type="evidence" value="ECO:0007669"/>
    <property type="project" value="UniProtKB-KW"/>
</dbReference>
<dbReference type="GO" id="GO:0005840">
    <property type="term" value="C:ribosome"/>
    <property type="evidence" value="ECO:0007669"/>
    <property type="project" value="UniProtKB-KW"/>
</dbReference>
<dbReference type="GO" id="GO:0070181">
    <property type="term" value="F:small ribosomal subunit rRNA binding"/>
    <property type="evidence" value="ECO:0007669"/>
    <property type="project" value="TreeGrafter"/>
</dbReference>
<dbReference type="GO" id="GO:0003735">
    <property type="term" value="F:structural constituent of ribosome"/>
    <property type="evidence" value="ECO:0007669"/>
    <property type="project" value="InterPro"/>
</dbReference>
<dbReference type="GO" id="GO:0006412">
    <property type="term" value="P:translation"/>
    <property type="evidence" value="ECO:0007669"/>
    <property type="project" value="UniProtKB-UniRule"/>
</dbReference>
<dbReference type="CDD" id="cd15487">
    <property type="entry name" value="bS6_chloro_cyano"/>
    <property type="match status" value="1"/>
</dbReference>
<dbReference type="Gene3D" id="3.30.70.60">
    <property type="match status" value="1"/>
</dbReference>
<dbReference type="HAMAP" id="MF_00360">
    <property type="entry name" value="Ribosomal_bS6"/>
    <property type="match status" value="1"/>
</dbReference>
<dbReference type="InterPro" id="IPR000529">
    <property type="entry name" value="Ribosomal_bS6"/>
</dbReference>
<dbReference type="InterPro" id="IPR020815">
    <property type="entry name" value="Ribosomal_bS6_CS"/>
</dbReference>
<dbReference type="InterPro" id="IPR035980">
    <property type="entry name" value="Ribosomal_bS6_sf"/>
</dbReference>
<dbReference type="InterPro" id="IPR020814">
    <property type="entry name" value="Ribosomal_S6_plastid/chlpt"/>
</dbReference>
<dbReference type="InterPro" id="IPR014717">
    <property type="entry name" value="Transl_elong_EF1B/ribsomal_bS6"/>
</dbReference>
<dbReference type="NCBIfam" id="TIGR00166">
    <property type="entry name" value="S6"/>
    <property type="match status" value="1"/>
</dbReference>
<dbReference type="PANTHER" id="PTHR21011">
    <property type="entry name" value="MITOCHONDRIAL 28S RIBOSOMAL PROTEIN S6"/>
    <property type="match status" value="1"/>
</dbReference>
<dbReference type="PANTHER" id="PTHR21011:SF1">
    <property type="entry name" value="SMALL RIBOSOMAL SUBUNIT PROTEIN BS6M"/>
    <property type="match status" value="1"/>
</dbReference>
<dbReference type="Pfam" id="PF01250">
    <property type="entry name" value="Ribosomal_S6"/>
    <property type="match status" value="1"/>
</dbReference>
<dbReference type="SUPFAM" id="SSF54995">
    <property type="entry name" value="Ribosomal protein S6"/>
    <property type="match status" value="1"/>
</dbReference>
<dbReference type="PROSITE" id="PS01048">
    <property type="entry name" value="RIBOSOMAL_S6"/>
    <property type="match status" value="1"/>
</dbReference>